<sequence length="590" mass="64143">MAPSIAQNEHINGEVKEVLWNLCKKQNYLPLNWEMAADSLRGSKLDQVKKMVDEFRKPIVKLGGETLTVAQVASIANVDNKSNGVRVELSESARAGVKASSDWVMDSMSKGTDSYGVTTGFGATSHRRTKNGGTLQKNLIRFLNAGVFGIGTESTHTLPHSATRAAMLVRINTLLQGYSGIRFEILEAITKLINSNISPCLPLRGTVTASGDLVPLSYIAGLLTGRPNSKAVGPTGSKLDAEEAFRVAGVTGGFFELQPKEGLALVNGTAVGSAMASIVLFESNILAVMFEVLSAIFAEVMNGKPEFTDYLTHKLKHHPGQIEAAAIMEHILDGSSYVKAAQKLHEMDPLQKPKQDRYALRTSPQWLGPQIEVIRAATKMIEREINSVNDNPLIDVSRNKAIHGGNFQGTPIGVSMDNTRLALASIGKLMFAQFSELVNDYYNNGLPSNLTAGRNPSLDYGFKGAEIAMASYCSELQFLANPVTNHVQSAEQHNQDVNSLGLISARKTAEAVDILKLMSSTYLVALCQAIDLRHLEENLKSVVKNTVSQVAKRTLTIGVLGELHPARFCEKELLRVVDREYLFAYADDPC</sequence>
<name>PAL2_SOLTU</name>
<comment type="function">
    <text evidence="2">This is a key enzyme of plant metabolism catalyzing the first reaction in the biosynthesis from L-phenylalanine of a wide variety of natural products based on the phenylpropane skeleton.</text>
</comment>
<comment type="catalytic activity">
    <reaction evidence="2">
        <text>L-phenylalanine = (E)-cinnamate + NH4(+)</text>
        <dbReference type="Rhea" id="RHEA:21384"/>
        <dbReference type="ChEBI" id="CHEBI:15669"/>
        <dbReference type="ChEBI" id="CHEBI:28938"/>
        <dbReference type="ChEBI" id="CHEBI:58095"/>
        <dbReference type="EC" id="4.3.1.24"/>
    </reaction>
</comment>
<comment type="pathway">
    <text evidence="5">Phenylpropanoid metabolism; trans-cinnamate biosynthesis; trans-cinnamate from L-phenylalanine: step 1/1.</text>
</comment>
<comment type="subunit">
    <text evidence="2">Homotetramer.</text>
</comment>
<comment type="subcellular location">
    <subcellularLocation>
        <location evidence="5">Cytoplasm</location>
    </subcellularLocation>
</comment>
<comment type="PTM">
    <text evidence="3">Contains an active site 4-methylidene-imidazol-5-one (MIO), which is formed autocatalytically by cyclization and dehydration of residues Ala-Ser-Gly.</text>
</comment>
<comment type="similarity">
    <text evidence="5">Belongs to the PAL/histidase family.</text>
</comment>
<dbReference type="EC" id="4.3.1.24" evidence="2"/>
<dbReference type="EMBL" id="X63104">
    <property type="protein sequence ID" value="CAA44818.1"/>
    <property type="molecule type" value="Genomic_DNA"/>
</dbReference>
<dbReference type="PIR" id="S70916">
    <property type="entry name" value="S70916"/>
</dbReference>
<dbReference type="SMR" id="P31426"/>
<dbReference type="STRING" id="4113.P31426"/>
<dbReference type="InParanoid" id="P31426"/>
<dbReference type="UniPathway" id="UPA00713">
    <property type="reaction ID" value="UER00725"/>
</dbReference>
<dbReference type="Proteomes" id="UP000011115">
    <property type="component" value="Unassembled WGS sequence"/>
</dbReference>
<dbReference type="ExpressionAtlas" id="P31426">
    <property type="expression patterns" value="baseline and differential"/>
</dbReference>
<dbReference type="GO" id="GO:0005737">
    <property type="term" value="C:cytoplasm"/>
    <property type="evidence" value="ECO:0007669"/>
    <property type="project" value="UniProtKB-SubCell"/>
</dbReference>
<dbReference type="GO" id="GO:0016841">
    <property type="term" value="F:ammonia-lyase activity"/>
    <property type="evidence" value="ECO:0000318"/>
    <property type="project" value="GO_Central"/>
</dbReference>
<dbReference type="GO" id="GO:0045548">
    <property type="term" value="F:phenylalanine ammonia-lyase activity"/>
    <property type="evidence" value="ECO:0007669"/>
    <property type="project" value="UniProtKB-EC"/>
</dbReference>
<dbReference type="GO" id="GO:0009800">
    <property type="term" value="P:cinnamic acid biosynthetic process"/>
    <property type="evidence" value="ECO:0007669"/>
    <property type="project" value="UniProtKB-UniPathway"/>
</dbReference>
<dbReference type="GO" id="GO:0006559">
    <property type="term" value="P:L-phenylalanine catabolic process"/>
    <property type="evidence" value="ECO:0007669"/>
    <property type="project" value="UniProtKB-KW"/>
</dbReference>
<dbReference type="CDD" id="cd00332">
    <property type="entry name" value="PAL-HAL"/>
    <property type="match status" value="1"/>
</dbReference>
<dbReference type="FunFam" id="1.10.275.10:FF:000009">
    <property type="entry name" value="Phenylalanine ammonia-lyase"/>
    <property type="match status" value="1"/>
</dbReference>
<dbReference type="FunFam" id="1.20.200.10:FF:000009">
    <property type="entry name" value="Phenylalanine ammonia-lyase"/>
    <property type="match status" value="1"/>
</dbReference>
<dbReference type="Gene3D" id="1.20.200.10">
    <property type="entry name" value="Fumarase/aspartase (Central domain)"/>
    <property type="match status" value="1"/>
</dbReference>
<dbReference type="Gene3D" id="1.10.275.10">
    <property type="entry name" value="Fumarase/aspartase (N-terminal domain)"/>
    <property type="match status" value="1"/>
</dbReference>
<dbReference type="Gene3D" id="1.10.274.20">
    <property type="entry name" value="Phenylalanine ammonia-lyase 1, domain 3"/>
    <property type="match status" value="1"/>
</dbReference>
<dbReference type="InterPro" id="IPR001106">
    <property type="entry name" value="Aromatic_Lyase"/>
</dbReference>
<dbReference type="InterPro" id="IPR024083">
    <property type="entry name" value="Fumarase/histidase_N"/>
</dbReference>
<dbReference type="InterPro" id="IPR008948">
    <property type="entry name" value="L-Aspartase-like"/>
</dbReference>
<dbReference type="InterPro" id="IPR022313">
    <property type="entry name" value="Phe/His_NH3-lyase_AS"/>
</dbReference>
<dbReference type="InterPro" id="IPR005922">
    <property type="entry name" value="Phe_NH3-lyase"/>
</dbReference>
<dbReference type="InterPro" id="IPR023144">
    <property type="entry name" value="Phe_NH3-lyase_shielding_dom_sf"/>
</dbReference>
<dbReference type="NCBIfam" id="TIGR01226">
    <property type="entry name" value="phe_am_lyase"/>
    <property type="match status" value="1"/>
</dbReference>
<dbReference type="PANTHER" id="PTHR10362">
    <property type="entry name" value="HISTIDINE AMMONIA-LYASE"/>
    <property type="match status" value="1"/>
</dbReference>
<dbReference type="Pfam" id="PF00221">
    <property type="entry name" value="Lyase_aromatic"/>
    <property type="match status" value="1"/>
</dbReference>
<dbReference type="SUPFAM" id="SSF48557">
    <property type="entry name" value="L-aspartase-like"/>
    <property type="match status" value="1"/>
</dbReference>
<dbReference type="PROSITE" id="PS00488">
    <property type="entry name" value="PAL_HISTIDASE"/>
    <property type="match status" value="1"/>
</dbReference>
<organism>
    <name type="scientific">Solanum tuberosum</name>
    <name type="common">Potato</name>
    <dbReference type="NCBI Taxonomy" id="4113"/>
    <lineage>
        <taxon>Eukaryota</taxon>
        <taxon>Viridiplantae</taxon>
        <taxon>Streptophyta</taxon>
        <taxon>Embryophyta</taxon>
        <taxon>Tracheophyta</taxon>
        <taxon>Spermatophyta</taxon>
        <taxon>Magnoliopsida</taxon>
        <taxon>eudicotyledons</taxon>
        <taxon>Gunneridae</taxon>
        <taxon>Pentapetalae</taxon>
        <taxon>asterids</taxon>
        <taxon>lamiids</taxon>
        <taxon>Solanales</taxon>
        <taxon>Solanaceae</taxon>
        <taxon>Solanoideae</taxon>
        <taxon>Solaneae</taxon>
        <taxon>Solanum</taxon>
    </lineage>
</organism>
<reference key="1">
    <citation type="journal article" date="1992" name="Eur. J. Biochem.">
        <title>Phenylalanine ammonia-lyase in potato (Solanum tuberosum L.). Genomic complexity, structural comparison of two selected genes and modes of expression.</title>
        <authorList>
            <person name="Joos H.J."/>
            <person name="Hahlbrock K."/>
        </authorList>
    </citation>
    <scope>NUCLEOTIDE SEQUENCE [GENOMIC DNA]</scope>
    <source>
        <strain>cv. Datura</strain>
    </source>
</reference>
<proteinExistence type="inferred from homology"/>
<evidence type="ECO:0000250" key="1">
    <source>
        <dbReference type="UniProtKB" id="P11544"/>
    </source>
</evidence>
<evidence type="ECO:0000250" key="2">
    <source>
        <dbReference type="UniProtKB" id="P24481"/>
    </source>
</evidence>
<evidence type="ECO:0000250" key="3">
    <source>
        <dbReference type="UniProtKB" id="Q68G84"/>
    </source>
</evidence>
<evidence type="ECO:0000255" key="4">
    <source>
        <dbReference type="PROSITE-ProRule" id="PRU10122"/>
    </source>
</evidence>
<evidence type="ECO:0000305" key="5"/>
<accession>P31426</accession>
<gene>
    <name type="primary">PAL-2</name>
</gene>
<feature type="chain" id="PRO_0000215420" description="Phenylalanine ammonia-lyase 2">
    <location>
        <begin position="1"/>
        <end position="590" status="greater than"/>
    </location>
</feature>
<feature type="active site" description="Proton donor/acceptor" evidence="3">
    <location>
        <position position="115"/>
    </location>
</feature>
<feature type="binding site" evidence="3">
    <location>
        <position position="267"/>
    </location>
    <ligand>
        <name>(E)-cinnamate</name>
        <dbReference type="ChEBI" id="CHEBI:15669"/>
    </ligand>
</feature>
<feature type="binding site" evidence="3">
    <location>
        <position position="355"/>
    </location>
    <ligand>
        <name>(E)-cinnamate</name>
        <dbReference type="ChEBI" id="CHEBI:15669"/>
    </ligand>
</feature>
<feature type="binding site" evidence="3">
    <location>
        <position position="361"/>
    </location>
    <ligand>
        <name>(E)-cinnamate</name>
        <dbReference type="ChEBI" id="CHEBI:15669"/>
    </ligand>
</feature>
<feature type="binding site" evidence="3">
    <location>
        <position position="391"/>
    </location>
    <ligand>
        <name>(E)-cinnamate</name>
        <dbReference type="ChEBI" id="CHEBI:15669"/>
    </ligand>
</feature>
<feature type="binding site" evidence="1">
    <location>
        <position position="463"/>
    </location>
    <ligand>
        <name>(E)-cinnamate</name>
        <dbReference type="ChEBI" id="CHEBI:15669"/>
    </ligand>
</feature>
<feature type="binding site" evidence="1">
    <location>
        <position position="491"/>
    </location>
    <ligand>
        <name>(E)-cinnamate</name>
        <dbReference type="ChEBI" id="CHEBI:15669"/>
    </ligand>
</feature>
<feature type="binding site" evidence="3">
    <location>
        <position position="494"/>
    </location>
    <ligand>
        <name>(E)-cinnamate</name>
        <dbReference type="ChEBI" id="CHEBI:15669"/>
    </ligand>
</feature>
<feature type="modified residue" description="2,3-didehydroalanine (Ser)" evidence="4">
    <location>
        <position position="210"/>
    </location>
</feature>
<feature type="cross-link" description="5-imidazolinone (Ala-Gly)" evidence="3">
    <location>
        <begin position="209"/>
        <end position="211"/>
    </location>
</feature>
<feature type="non-terminal residue">
    <location>
        <position position="590"/>
    </location>
</feature>
<protein>
    <recommendedName>
        <fullName>Phenylalanine ammonia-lyase 2</fullName>
        <ecNumber evidence="2">4.3.1.24</ecNumber>
    </recommendedName>
</protein>
<keyword id="KW-0963">Cytoplasm</keyword>
<keyword id="KW-0456">Lyase</keyword>
<keyword id="KW-0585">Phenylalanine catabolism</keyword>
<keyword id="KW-0587">Phenylpropanoid metabolism</keyword>
<keyword id="KW-1185">Reference proteome</keyword>